<protein>
    <recommendedName>
        <fullName evidence="1">Replication restart protein PriB</fullName>
    </recommendedName>
</protein>
<name>PRIB_SALTI</name>
<gene>
    <name evidence="1" type="primary">priB</name>
    <name type="ordered locus">STY4748</name>
    <name type="ordered locus">t4443</name>
</gene>
<evidence type="ECO:0000255" key="1">
    <source>
        <dbReference type="HAMAP-Rule" id="MF_00720"/>
    </source>
</evidence>
<feature type="chain" id="PRO_0000199060" description="Replication restart protein PriB">
    <location>
        <begin position="1"/>
        <end position="104"/>
    </location>
</feature>
<feature type="domain" description="SSB" evidence="1">
    <location>
        <begin position="1"/>
        <end position="101"/>
    </location>
</feature>
<proteinExistence type="inferred from homology"/>
<comment type="function">
    <text evidence="1">Involved in the restart of stalled replication forks, which reloads the replicative helicase on sites other than the origin of replication; the PriA-PriB pathway is the major replication restart pathway. During primosome assembly it facilitates complex formation between PriA and DnaT on DNA; stabilizes PriA on DNA. Stimulates the DNA unwinding activity of PriA helicase.</text>
</comment>
<comment type="subunit">
    <text evidence="1">Homodimer. Interacts with PriA and DnaT. Component of the replication restart primosome. Primosome assembly occurs via a 'hand-off' mechanism. PriA binds to replication forks, subsequently PriB then DnaT bind; DnaT then displaces ssDNA to generate the helicase loading substrate.</text>
</comment>
<comment type="similarity">
    <text evidence="1">Belongs to the PriB family.</text>
</comment>
<sequence length="104" mass="11444">MTNRLTLSGTVCRAPLRKVSPSGIPHCQFVLEHRSVQEEAGFHRQAWCQMPVIVSGHENQAITHSITVGSRITVQGFISCHKAKNGLSKMVLHAEQIELIDSGD</sequence>
<dbReference type="EMBL" id="AL513382">
    <property type="protein sequence ID" value="CAD06869.1"/>
    <property type="molecule type" value="Genomic_DNA"/>
</dbReference>
<dbReference type="EMBL" id="AE014613">
    <property type="protein sequence ID" value="AAO71890.1"/>
    <property type="molecule type" value="Genomic_DNA"/>
</dbReference>
<dbReference type="RefSeq" id="NP_458826.1">
    <property type="nucleotide sequence ID" value="NC_003198.1"/>
</dbReference>
<dbReference type="RefSeq" id="WP_001768658.1">
    <property type="nucleotide sequence ID" value="NZ_WSUR01000012.1"/>
</dbReference>
<dbReference type="SMR" id="Q8Z164"/>
<dbReference type="STRING" id="220341.gene:17588569"/>
<dbReference type="KEGG" id="stt:t4443"/>
<dbReference type="KEGG" id="sty:STY4748"/>
<dbReference type="PATRIC" id="fig|220341.7.peg.4850"/>
<dbReference type="eggNOG" id="COG2965">
    <property type="taxonomic scope" value="Bacteria"/>
</dbReference>
<dbReference type="HOGENOM" id="CLU_166075_0_0_6"/>
<dbReference type="OMA" id="CQMPVII"/>
<dbReference type="OrthoDB" id="9180733at2"/>
<dbReference type="Proteomes" id="UP000000541">
    <property type="component" value="Chromosome"/>
</dbReference>
<dbReference type="Proteomes" id="UP000002670">
    <property type="component" value="Chromosome"/>
</dbReference>
<dbReference type="GO" id="GO:1990077">
    <property type="term" value="C:primosome complex"/>
    <property type="evidence" value="ECO:0007669"/>
    <property type="project" value="UniProtKB-KW"/>
</dbReference>
<dbReference type="GO" id="GO:0003697">
    <property type="term" value="F:single-stranded DNA binding"/>
    <property type="evidence" value="ECO:0007669"/>
    <property type="project" value="UniProtKB-UniRule"/>
</dbReference>
<dbReference type="GO" id="GO:0006269">
    <property type="term" value="P:DNA replication, synthesis of primer"/>
    <property type="evidence" value="ECO:0007669"/>
    <property type="project" value="UniProtKB-KW"/>
</dbReference>
<dbReference type="CDD" id="cd04496">
    <property type="entry name" value="SSB_OBF"/>
    <property type="match status" value="1"/>
</dbReference>
<dbReference type="FunFam" id="2.40.50.140:FF:000077">
    <property type="entry name" value="Primosomal replication protein N"/>
    <property type="match status" value="1"/>
</dbReference>
<dbReference type="Gene3D" id="2.40.50.140">
    <property type="entry name" value="Nucleic acid-binding proteins"/>
    <property type="match status" value="1"/>
</dbReference>
<dbReference type="HAMAP" id="MF_00720">
    <property type="entry name" value="PriB"/>
    <property type="match status" value="1"/>
</dbReference>
<dbReference type="InterPro" id="IPR012340">
    <property type="entry name" value="NA-bd_OB-fold"/>
</dbReference>
<dbReference type="InterPro" id="IPR000424">
    <property type="entry name" value="Primosome_PriB/ssb"/>
</dbReference>
<dbReference type="InterPro" id="IPR023646">
    <property type="entry name" value="Prisomal_replication_PriB"/>
</dbReference>
<dbReference type="NCBIfam" id="TIGR04418">
    <property type="entry name" value="PriB_gamma"/>
    <property type="match status" value="1"/>
</dbReference>
<dbReference type="Pfam" id="PF22657">
    <property type="entry name" value="SSB_1"/>
    <property type="match status" value="1"/>
</dbReference>
<dbReference type="PIRSF" id="PIRSF003135">
    <property type="entry name" value="Primosomal_n"/>
    <property type="match status" value="1"/>
</dbReference>
<dbReference type="SUPFAM" id="SSF50249">
    <property type="entry name" value="Nucleic acid-binding proteins"/>
    <property type="match status" value="1"/>
</dbReference>
<dbReference type="PROSITE" id="PS50935">
    <property type="entry name" value="SSB"/>
    <property type="match status" value="1"/>
</dbReference>
<keyword id="KW-0235">DNA replication</keyword>
<keyword id="KW-0238">DNA-binding</keyword>
<keyword id="KW-0639">Primosome</keyword>
<organism>
    <name type="scientific">Salmonella typhi</name>
    <dbReference type="NCBI Taxonomy" id="90370"/>
    <lineage>
        <taxon>Bacteria</taxon>
        <taxon>Pseudomonadati</taxon>
        <taxon>Pseudomonadota</taxon>
        <taxon>Gammaproteobacteria</taxon>
        <taxon>Enterobacterales</taxon>
        <taxon>Enterobacteriaceae</taxon>
        <taxon>Salmonella</taxon>
    </lineage>
</organism>
<accession>Q8Z164</accession>
<reference key="1">
    <citation type="journal article" date="2001" name="Nature">
        <title>Complete genome sequence of a multiple drug resistant Salmonella enterica serovar Typhi CT18.</title>
        <authorList>
            <person name="Parkhill J."/>
            <person name="Dougan G."/>
            <person name="James K.D."/>
            <person name="Thomson N.R."/>
            <person name="Pickard D."/>
            <person name="Wain J."/>
            <person name="Churcher C.M."/>
            <person name="Mungall K.L."/>
            <person name="Bentley S.D."/>
            <person name="Holden M.T.G."/>
            <person name="Sebaihia M."/>
            <person name="Baker S."/>
            <person name="Basham D."/>
            <person name="Brooks K."/>
            <person name="Chillingworth T."/>
            <person name="Connerton P."/>
            <person name="Cronin A."/>
            <person name="Davis P."/>
            <person name="Davies R.M."/>
            <person name="Dowd L."/>
            <person name="White N."/>
            <person name="Farrar J."/>
            <person name="Feltwell T."/>
            <person name="Hamlin N."/>
            <person name="Haque A."/>
            <person name="Hien T.T."/>
            <person name="Holroyd S."/>
            <person name="Jagels K."/>
            <person name="Krogh A."/>
            <person name="Larsen T.S."/>
            <person name="Leather S."/>
            <person name="Moule S."/>
            <person name="O'Gaora P."/>
            <person name="Parry C."/>
            <person name="Quail M.A."/>
            <person name="Rutherford K.M."/>
            <person name="Simmonds M."/>
            <person name="Skelton J."/>
            <person name="Stevens K."/>
            <person name="Whitehead S."/>
            <person name="Barrell B.G."/>
        </authorList>
    </citation>
    <scope>NUCLEOTIDE SEQUENCE [LARGE SCALE GENOMIC DNA]</scope>
    <source>
        <strain>CT18</strain>
    </source>
</reference>
<reference key="2">
    <citation type="journal article" date="2003" name="J. Bacteriol.">
        <title>Comparative genomics of Salmonella enterica serovar Typhi strains Ty2 and CT18.</title>
        <authorList>
            <person name="Deng W."/>
            <person name="Liou S.-R."/>
            <person name="Plunkett G. III"/>
            <person name="Mayhew G.F."/>
            <person name="Rose D.J."/>
            <person name="Burland V."/>
            <person name="Kodoyianni V."/>
            <person name="Schwartz D.C."/>
            <person name="Blattner F.R."/>
        </authorList>
    </citation>
    <scope>NUCLEOTIDE SEQUENCE [LARGE SCALE GENOMIC DNA]</scope>
    <source>
        <strain>ATCC 700931 / Ty2</strain>
    </source>
</reference>